<proteinExistence type="inferred from homology"/>
<gene>
    <name evidence="2" type="primary">mutM</name>
    <name evidence="2" type="synonym">fpg</name>
    <name type="ordered locus">PMT_0186</name>
</gene>
<dbReference type="EC" id="3.2.2.23" evidence="2"/>
<dbReference type="EC" id="4.2.99.18" evidence="2"/>
<dbReference type="EMBL" id="BX548175">
    <property type="protein sequence ID" value="CAE20361.1"/>
    <property type="molecule type" value="Genomic_DNA"/>
</dbReference>
<dbReference type="RefSeq" id="WP_011129565.1">
    <property type="nucleotide sequence ID" value="NC_005071.1"/>
</dbReference>
<dbReference type="SMR" id="Q7V8Y5"/>
<dbReference type="KEGG" id="pmt:PMT_0186"/>
<dbReference type="eggNOG" id="COG0266">
    <property type="taxonomic scope" value="Bacteria"/>
</dbReference>
<dbReference type="HOGENOM" id="CLU_038423_1_2_3"/>
<dbReference type="OrthoDB" id="9800855at2"/>
<dbReference type="Proteomes" id="UP000001423">
    <property type="component" value="Chromosome"/>
</dbReference>
<dbReference type="GO" id="GO:0034039">
    <property type="term" value="F:8-oxo-7,8-dihydroguanine DNA N-glycosylase activity"/>
    <property type="evidence" value="ECO:0007669"/>
    <property type="project" value="TreeGrafter"/>
</dbReference>
<dbReference type="GO" id="GO:0140078">
    <property type="term" value="F:class I DNA-(apurinic or apyrimidinic site) endonuclease activity"/>
    <property type="evidence" value="ECO:0007669"/>
    <property type="project" value="UniProtKB-EC"/>
</dbReference>
<dbReference type="GO" id="GO:0003684">
    <property type="term" value="F:damaged DNA binding"/>
    <property type="evidence" value="ECO:0007669"/>
    <property type="project" value="InterPro"/>
</dbReference>
<dbReference type="GO" id="GO:0008270">
    <property type="term" value="F:zinc ion binding"/>
    <property type="evidence" value="ECO:0007669"/>
    <property type="project" value="UniProtKB-UniRule"/>
</dbReference>
<dbReference type="GO" id="GO:0006284">
    <property type="term" value="P:base-excision repair"/>
    <property type="evidence" value="ECO:0007669"/>
    <property type="project" value="InterPro"/>
</dbReference>
<dbReference type="CDD" id="cd08966">
    <property type="entry name" value="EcFpg-like_N"/>
    <property type="match status" value="1"/>
</dbReference>
<dbReference type="FunFam" id="1.10.8.50:FF:000003">
    <property type="entry name" value="Formamidopyrimidine-DNA glycosylase"/>
    <property type="match status" value="1"/>
</dbReference>
<dbReference type="Gene3D" id="1.10.8.50">
    <property type="match status" value="1"/>
</dbReference>
<dbReference type="Gene3D" id="3.20.190.10">
    <property type="entry name" value="MutM-like, N-terminal"/>
    <property type="match status" value="1"/>
</dbReference>
<dbReference type="HAMAP" id="MF_00103">
    <property type="entry name" value="Fapy_DNA_glycosyl"/>
    <property type="match status" value="1"/>
</dbReference>
<dbReference type="InterPro" id="IPR015886">
    <property type="entry name" value="DNA_glyclase/AP_lyase_DNA-bd"/>
</dbReference>
<dbReference type="InterPro" id="IPR015887">
    <property type="entry name" value="DNA_glyclase_Znf_dom_DNA_BS"/>
</dbReference>
<dbReference type="InterPro" id="IPR020629">
    <property type="entry name" value="Formamido-pyr_DNA_Glyclase"/>
</dbReference>
<dbReference type="InterPro" id="IPR012319">
    <property type="entry name" value="FPG_cat"/>
</dbReference>
<dbReference type="InterPro" id="IPR035937">
    <property type="entry name" value="MutM-like_N-ter"/>
</dbReference>
<dbReference type="InterPro" id="IPR010979">
    <property type="entry name" value="Ribosomal_uS13-like_H2TH"/>
</dbReference>
<dbReference type="InterPro" id="IPR000214">
    <property type="entry name" value="Znf_DNA_glyclase/AP_lyase"/>
</dbReference>
<dbReference type="InterPro" id="IPR010663">
    <property type="entry name" value="Znf_FPG/IleRS"/>
</dbReference>
<dbReference type="NCBIfam" id="TIGR00577">
    <property type="entry name" value="fpg"/>
    <property type="match status" value="1"/>
</dbReference>
<dbReference type="NCBIfam" id="NF002211">
    <property type="entry name" value="PRK01103.1"/>
    <property type="match status" value="1"/>
</dbReference>
<dbReference type="NCBIfam" id="NF010551">
    <property type="entry name" value="PRK13945.1"/>
    <property type="match status" value="1"/>
</dbReference>
<dbReference type="PANTHER" id="PTHR22993">
    <property type="entry name" value="FORMAMIDOPYRIMIDINE-DNA GLYCOSYLASE"/>
    <property type="match status" value="1"/>
</dbReference>
<dbReference type="PANTHER" id="PTHR22993:SF9">
    <property type="entry name" value="FORMAMIDOPYRIMIDINE-DNA GLYCOSYLASE"/>
    <property type="match status" value="1"/>
</dbReference>
<dbReference type="Pfam" id="PF01149">
    <property type="entry name" value="Fapy_DNA_glyco"/>
    <property type="match status" value="1"/>
</dbReference>
<dbReference type="Pfam" id="PF06831">
    <property type="entry name" value="H2TH"/>
    <property type="match status" value="1"/>
</dbReference>
<dbReference type="Pfam" id="PF06827">
    <property type="entry name" value="zf-FPG_IleRS"/>
    <property type="match status" value="1"/>
</dbReference>
<dbReference type="SMART" id="SM00898">
    <property type="entry name" value="Fapy_DNA_glyco"/>
    <property type="match status" value="1"/>
</dbReference>
<dbReference type="SMART" id="SM01232">
    <property type="entry name" value="H2TH"/>
    <property type="match status" value="1"/>
</dbReference>
<dbReference type="SUPFAM" id="SSF57716">
    <property type="entry name" value="Glucocorticoid receptor-like (DNA-binding domain)"/>
    <property type="match status" value="1"/>
</dbReference>
<dbReference type="SUPFAM" id="SSF81624">
    <property type="entry name" value="N-terminal domain of MutM-like DNA repair proteins"/>
    <property type="match status" value="1"/>
</dbReference>
<dbReference type="SUPFAM" id="SSF46946">
    <property type="entry name" value="S13-like H2TH domain"/>
    <property type="match status" value="1"/>
</dbReference>
<dbReference type="PROSITE" id="PS51068">
    <property type="entry name" value="FPG_CAT"/>
    <property type="match status" value="1"/>
</dbReference>
<dbReference type="PROSITE" id="PS01242">
    <property type="entry name" value="ZF_FPG_1"/>
    <property type="match status" value="1"/>
</dbReference>
<dbReference type="PROSITE" id="PS51066">
    <property type="entry name" value="ZF_FPG_2"/>
    <property type="match status" value="1"/>
</dbReference>
<comment type="function">
    <text evidence="2">Involved in base excision repair of DNA damaged by oxidation or by mutagenic agents. Acts as a DNA glycosylase that recognizes and removes damaged bases. Has a preference for oxidized purines, such as 7,8-dihydro-8-oxoguanine (8-oxoG). Has AP (apurinic/apyrimidinic) lyase activity and introduces nicks in the DNA strand. Cleaves the DNA backbone by beta-delta elimination to generate a single-strand break at the site of the removed base with both 3'- and 5'-phosphates.</text>
</comment>
<comment type="catalytic activity">
    <reaction evidence="2">
        <text>Hydrolysis of DNA containing ring-opened 7-methylguanine residues, releasing 2,6-diamino-4-hydroxy-5-(N-methyl)formamidopyrimidine.</text>
        <dbReference type="EC" id="3.2.2.23"/>
    </reaction>
</comment>
<comment type="catalytic activity">
    <reaction evidence="2">
        <text>2'-deoxyribonucleotide-(2'-deoxyribose 5'-phosphate)-2'-deoxyribonucleotide-DNA = a 3'-end 2'-deoxyribonucleotide-(2,3-dehydro-2,3-deoxyribose 5'-phosphate)-DNA + a 5'-end 5'-phospho-2'-deoxyribonucleoside-DNA + H(+)</text>
        <dbReference type="Rhea" id="RHEA:66592"/>
        <dbReference type="Rhea" id="RHEA-COMP:13180"/>
        <dbReference type="Rhea" id="RHEA-COMP:16897"/>
        <dbReference type="Rhea" id="RHEA-COMP:17067"/>
        <dbReference type="ChEBI" id="CHEBI:15378"/>
        <dbReference type="ChEBI" id="CHEBI:136412"/>
        <dbReference type="ChEBI" id="CHEBI:157695"/>
        <dbReference type="ChEBI" id="CHEBI:167181"/>
        <dbReference type="EC" id="4.2.99.18"/>
    </reaction>
</comment>
<comment type="cofactor">
    <cofactor evidence="2">
        <name>Zn(2+)</name>
        <dbReference type="ChEBI" id="CHEBI:29105"/>
    </cofactor>
    <text evidence="2">Binds 1 zinc ion per subunit.</text>
</comment>
<comment type="subunit">
    <text evidence="2">Monomer.</text>
</comment>
<comment type="similarity">
    <text evidence="2">Belongs to the FPG family.</text>
</comment>
<accession>Q7V8Y5</accession>
<protein>
    <recommendedName>
        <fullName evidence="2">Formamidopyrimidine-DNA glycosylase</fullName>
        <shortName evidence="2">Fapy-DNA glycosylase</shortName>
        <ecNumber evidence="2">3.2.2.23</ecNumber>
    </recommendedName>
    <alternativeName>
        <fullName evidence="2">DNA-(apurinic or apyrimidinic site) lyase MutM</fullName>
        <shortName evidence="2">AP lyase MutM</shortName>
        <ecNumber evidence="2">4.2.99.18</ecNumber>
    </alternativeName>
</protein>
<sequence>MPELPEVETVRRGLADRLVDFQIGQVEVCRERAIASPGGSALFIKMLCGMHVGSWLRRGKYLMASLHHEIAQSSADSEPDPDGGWWGVHLRMTGQFQWHEAISSPCPHTRVRIWNKKNEELRFVDTRSFGQMWWVPPGNAPETIITGLQKLGPEPFSSAFNSSYLSKRLKGSKRPIKSALLDQSIVAGAGNIYTDESLFAARIRPHTPSGQLKKVELERLCNCLTEVLRVSIGAGGTTFSDFRDLEGINGNYGGQAWVYRRGGQACRICSTPIRRESLCGRGTHWCPNCQR</sequence>
<organism>
    <name type="scientific">Prochlorococcus marinus (strain MIT 9313)</name>
    <dbReference type="NCBI Taxonomy" id="74547"/>
    <lineage>
        <taxon>Bacteria</taxon>
        <taxon>Bacillati</taxon>
        <taxon>Cyanobacteriota</taxon>
        <taxon>Cyanophyceae</taxon>
        <taxon>Synechococcales</taxon>
        <taxon>Prochlorococcaceae</taxon>
        <taxon>Prochlorococcus</taxon>
    </lineage>
</organism>
<keyword id="KW-0227">DNA damage</keyword>
<keyword id="KW-0234">DNA repair</keyword>
<keyword id="KW-0238">DNA-binding</keyword>
<keyword id="KW-0326">Glycosidase</keyword>
<keyword id="KW-0378">Hydrolase</keyword>
<keyword id="KW-0456">Lyase</keyword>
<keyword id="KW-0479">Metal-binding</keyword>
<keyword id="KW-0511">Multifunctional enzyme</keyword>
<keyword id="KW-1185">Reference proteome</keyword>
<keyword id="KW-0862">Zinc</keyword>
<keyword id="KW-0863">Zinc-finger</keyword>
<reference key="1">
    <citation type="journal article" date="2003" name="Nature">
        <title>Genome divergence in two Prochlorococcus ecotypes reflects oceanic niche differentiation.</title>
        <authorList>
            <person name="Rocap G."/>
            <person name="Larimer F.W."/>
            <person name="Lamerdin J.E."/>
            <person name="Malfatti S."/>
            <person name="Chain P."/>
            <person name="Ahlgren N.A."/>
            <person name="Arellano A."/>
            <person name="Coleman M."/>
            <person name="Hauser L."/>
            <person name="Hess W.R."/>
            <person name="Johnson Z.I."/>
            <person name="Land M.L."/>
            <person name="Lindell D."/>
            <person name="Post A.F."/>
            <person name="Regala W."/>
            <person name="Shah M."/>
            <person name="Shaw S.L."/>
            <person name="Steglich C."/>
            <person name="Sullivan M.B."/>
            <person name="Ting C.S."/>
            <person name="Tolonen A."/>
            <person name="Webb E.A."/>
            <person name="Zinser E.R."/>
            <person name="Chisholm S.W."/>
        </authorList>
    </citation>
    <scope>NUCLEOTIDE SEQUENCE [LARGE SCALE GENOMIC DNA]</scope>
    <source>
        <strain>MIT 9313</strain>
    </source>
</reference>
<evidence type="ECO:0000250" key="1"/>
<evidence type="ECO:0000255" key="2">
    <source>
        <dbReference type="HAMAP-Rule" id="MF_00103"/>
    </source>
</evidence>
<feature type="initiator methionine" description="Removed" evidence="1">
    <location>
        <position position="1"/>
    </location>
</feature>
<feature type="chain" id="PRO_0000170850" description="Formamidopyrimidine-DNA glycosylase">
    <location>
        <begin position="2"/>
        <end position="291"/>
    </location>
</feature>
<feature type="zinc finger region" description="FPG-type" evidence="2">
    <location>
        <begin position="257"/>
        <end position="291"/>
    </location>
</feature>
<feature type="active site" description="Schiff-base intermediate with DNA" evidence="2">
    <location>
        <position position="2"/>
    </location>
</feature>
<feature type="active site" description="Proton donor" evidence="2">
    <location>
        <position position="3"/>
    </location>
</feature>
<feature type="active site" description="Proton donor; for beta-elimination activity" evidence="2">
    <location>
        <position position="60"/>
    </location>
</feature>
<feature type="active site" description="Proton donor; for delta-elimination activity" evidence="2">
    <location>
        <position position="281"/>
    </location>
</feature>
<feature type="binding site" evidence="2">
    <location>
        <position position="108"/>
    </location>
    <ligand>
        <name>DNA</name>
        <dbReference type="ChEBI" id="CHEBI:16991"/>
    </ligand>
</feature>
<feature type="binding site" evidence="2">
    <location>
        <position position="127"/>
    </location>
    <ligand>
        <name>DNA</name>
        <dbReference type="ChEBI" id="CHEBI:16991"/>
    </ligand>
</feature>
<name>FPG_PROMM</name>